<accession>Q6G8U4</accession>
<reference key="1">
    <citation type="journal article" date="2004" name="Proc. Natl. Acad. Sci. U.S.A.">
        <title>Complete genomes of two clinical Staphylococcus aureus strains: evidence for the rapid evolution of virulence and drug resistance.</title>
        <authorList>
            <person name="Holden M.T.G."/>
            <person name="Feil E.J."/>
            <person name="Lindsay J.A."/>
            <person name="Peacock S.J."/>
            <person name="Day N.P.J."/>
            <person name="Enright M.C."/>
            <person name="Foster T.J."/>
            <person name="Moore C.E."/>
            <person name="Hurst L."/>
            <person name="Atkin R."/>
            <person name="Barron A."/>
            <person name="Bason N."/>
            <person name="Bentley S.D."/>
            <person name="Chillingworth C."/>
            <person name="Chillingworth T."/>
            <person name="Churcher C."/>
            <person name="Clark L."/>
            <person name="Corton C."/>
            <person name="Cronin A."/>
            <person name="Doggett J."/>
            <person name="Dowd L."/>
            <person name="Feltwell T."/>
            <person name="Hance Z."/>
            <person name="Harris B."/>
            <person name="Hauser H."/>
            <person name="Holroyd S."/>
            <person name="Jagels K."/>
            <person name="James K.D."/>
            <person name="Lennard N."/>
            <person name="Line A."/>
            <person name="Mayes R."/>
            <person name="Moule S."/>
            <person name="Mungall K."/>
            <person name="Ormond D."/>
            <person name="Quail M.A."/>
            <person name="Rabbinowitsch E."/>
            <person name="Rutherford K.M."/>
            <person name="Sanders M."/>
            <person name="Sharp S."/>
            <person name="Simmonds M."/>
            <person name="Stevens K."/>
            <person name="Whitehead S."/>
            <person name="Barrell B.G."/>
            <person name="Spratt B.G."/>
            <person name="Parkhill J."/>
        </authorList>
    </citation>
    <scope>NUCLEOTIDE SEQUENCE [LARGE SCALE GENOMIC DNA]</scope>
    <source>
        <strain>MSSA476</strain>
    </source>
</reference>
<proteinExistence type="inferred from homology"/>
<evidence type="ECO:0000256" key="1">
    <source>
        <dbReference type="SAM" id="MobiDB-lite"/>
    </source>
</evidence>
<evidence type="ECO:0000305" key="2"/>
<organism>
    <name type="scientific">Staphylococcus aureus (strain MSSA476)</name>
    <dbReference type="NCBI Taxonomy" id="282459"/>
    <lineage>
        <taxon>Bacteria</taxon>
        <taxon>Bacillati</taxon>
        <taxon>Bacillota</taxon>
        <taxon>Bacilli</taxon>
        <taxon>Bacillales</taxon>
        <taxon>Staphylococcaceae</taxon>
        <taxon>Staphylococcus</taxon>
    </lineage>
</organism>
<sequence>MADESKFDQFKGNVKETVGNVTDNKELEKEGQQDKATGKAKEVVENAKNKITDAIDKLKK</sequence>
<comment type="similarity">
    <text evidence="2">Belongs to the UPF0337 (CsbD) family.</text>
</comment>
<gene>
    <name type="ordered locus">SAS1561</name>
</gene>
<name>Y1561_STAAS</name>
<protein>
    <recommendedName>
        <fullName>UPF0337 protein SAS1561</fullName>
    </recommendedName>
</protein>
<dbReference type="EMBL" id="BX571857">
    <property type="protein sequence ID" value="CAG43362.1"/>
    <property type="molecule type" value="Genomic_DNA"/>
</dbReference>
<dbReference type="RefSeq" id="WP_000752909.1">
    <property type="nucleotide sequence ID" value="NC_002953.3"/>
</dbReference>
<dbReference type="SMR" id="Q6G8U4"/>
<dbReference type="KEGG" id="sas:SAS1561"/>
<dbReference type="HOGENOM" id="CLU_135567_0_3_9"/>
<dbReference type="Gene3D" id="1.10.1470.10">
    <property type="entry name" value="YjbJ"/>
    <property type="match status" value="1"/>
</dbReference>
<dbReference type="InterPro" id="IPR008462">
    <property type="entry name" value="CsbD"/>
</dbReference>
<dbReference type="InterPro" id="IPR050423">
    <property type="entry name" value="UPF0337_stress_rsp"/>
</dbReference>
<dbReference type="InterPro" id="IPR036629">
    <property type="entry name" value="YjbJ_sf"/>
</dbReference>
<dbReference type="PANTHER" id="PTHR34977">
    <property type="entry name" value="UPF0337 PROTEIN YJBJ"/>
    <property type="match status" value="1"/>
</dbReference>
<dbReference type="PANTHER" id="PTHR34977:SF1">
    <property type="entry name" value="UPF0337 PROTEIN YJBJ"/>
    <property type="match status" value="1"/>
</dbReference>
<dbReference type="Pfam" id="PF05532">
    <property type="entry name" value="CsbD"/>
    <property type="match status" value="1"/>
</dbReference>
<dbReference type="SUPFAM" id="SSF69047">
    <property type="entry name" value="Hypothetical protein YjbJ"/>
    <property type="match status" value="1"/>
</dbReference>
<feature type="chain" id="PRO_0000210036" description="UPF0337 protein SAS1561">
    <location>
        <begin position="1"/>
        <end position="60"/>
    </location>
</feature>
<feature type="region of interest" description="Disordered" evidence="1">
    <location>
        <begin position="18"/>
        <end position="41"/>
    </location>
</feature>
<feature type="compositionally biased region" description="Basic and acidic residues" evidence="1">
    <location>
        <begin position="23"/>
        <end position="41"/>
    </location>
</feature>